<reference key="1">
    <citation type="journal article" date="2009" name="Proc. Natl. Acad. Sci. U.S.A.">
        <title>Biogeography of the Sulfolobus islandicus pan-genome.</title>
        <authorList>
            <person name="Reno M.L."/>
            <person name="Held N.L."/>
            <person name="Fields C.J."/>
            <person name="Burke P.V."/>
            <person name="Whitaker R.J."/>
        </authorList>
    </citation>
    <scope>NUCLEOTIDE SEQUENCE [LARGE SCALE GENOMIC DNA]</scope>
    <source>
        <strain>Y.G.57.14 / Yellowstone #1</strain>
    </source>
</reference>
<accession>C3NEG2</accession>
<dbReference type="EMBL" id="CP001403">
    <property type="protein sequence ID" value="ACP45701.1"/>
    <property type="molecule type" value="Genomic_DNA"/>
</dbReference>
<dbReference type="RefSeq" id="WP_012711437.1">
    <property type="nucleotide sequence ID" value="NC_012622.1"/>
</dbReference>
<dbReference type="SMR" id="C3NEG2"/>
<dbReference type="KEGG" id="siy:YG5714_1434"/>
<dbReference type="HOGENOM" id="CLU_056222_2_0_2"/>
<dbReference type="Proteomes" id="UP000002308">
    <property type="component" value="Chromosome"/>
</dbReference>
<dbReference type="GO" id="GO:0022625">
    <property type="term" value="C:cytosolic large ribosomal subunit"/>
    <property type="evidence" value="ECO:0007669"/>
    <property type="project" value="TreeGrafter"/>
</dbReference>
<dbReference type="GO" id="GO:0008097">
    <property type="term" value="F:5S rRNA binding"/>
    <property type="evidence" value="ECO:0007669"/>
    <property type="project" value="InterPro"/>
</dbReference>
<dbReference type="GO" id="GO:0003735">
    <property type="term" value="F:structural constituent of ribosome"/>
    <property type="evidence" value="ECO:0007669"/>
    <property type="project" value="InterPro"/>
</dbReference>
<dbReference type="GO" id="GO:0000027">
    <property type="term" value="P:ribosomal large subunit assembly"/>
    <property type="evidence" value="ECO:0007669"/>
    <property type="project" value="TreeGrafter"/>
</dbReference>
<dbReference type="GO" id="GO:0006412">
    <property type="term" value="P:translation"/>
    <property type="evidence" value="ECO:0007669"/>
    <property type="project" value="UniProtKB-UniRule"/>
</dbReference>
<dbReference type="CDD" id="cd00432">
    <property type="entry name" value="Ribosomal_L18_L5e"/>
    <property type="match status" value="1"/>
</dbReference>
<dbReference type="FunFam" id="3.30.420.100:FF:000008">
    <property type="entry name" value="50S ribosomal protein L18"/>
    <property type="match status" value="1"/>
</dbReference>
<dbReference type="Gene3D" id="3.30.420.100">
    <property type="match status" value="1"/>
</dbReference>
<dbReference type="HAMAP" id="MF_01337_A">
    <property type="entry name" value="Ribosomal_uL18_A"/>
    <property type="match status" value="1"/>
</dbReference>
<dbReference type="InterPro" id="IPR005485">
    <property type="entry name" value="Rbsml_uL18_euk"/>
</dbReference>
<dbReference type="NCBIfam" id="NF006342">
    <property type="entry name" value="PRK08569.1"/>
    <property type="match status" value="1"/>
</dbReference>
<dbReference type="PANTHER" id="PTHR23410:SF12">
    <property type="entry name" value="LARGE RIBOSOMAL SUBUNIT PROTEIN UL18"/>
    <property type="match status" value="1"/>
</dbReference>
<dbReference type="PANTHER" id="PTHR23410">
    <property type="entry name" value="RIBOSOMAL PROTEIN L5-RELATED"/>
    <property type="match status" value="1"/>
</dbReference>
<dbReference type="Pfam" id="PF17144">
    <property type="entry name" value="Ribosomal_L5e"/>
    <property type="match status" value="2"/>
</dbReference>
<dbReference type="SUPFAM" id="SSF53137">
    <property type="entry name" value="Translational machinery components"/>
    <property type="match status" value="1"/>
</dbReference>
<proteinExistence type="inferred from homology"/>
<sequence length="196" mass="22091">MANGPNYKIKPRRRREGKTNYYKRYVYVISKQIRFIVRITNKYVIVQIAKIDPKGDIMVASAHSSELTKKFEWKGDENNTPSAYLTGYLAALRAVKKGVTECVADIGLHVPSKGNKVFYAIKGAIDAGLKIPIGDISIENDRIKGEHIAKYAEKLKSENLDLYNKLFSRYLGRGLNPENLPSHFEEILNKIKSSGG</sequence>
<comment type="function">
    <text evidence="1">This is one of the proteins that bind and probably mediate the attachment of the 5S RNA into the large ribosomal subunit, where it forms part of the central protuberance.</text>
</comment>
<comment type="subunit">
    <text evidence="1">Part of the 50S ribosomal subunit. Contacts the 5S and 23S rRNAs.</text>
</comment>
<comment type="similarity">
    <text evidence="1">Belongs to the universal ribosomal protein uL18 family.</text>
</comment>
<protein>
    <recommendedName>
        <fullName evidence="1">Large ribosomal subunit protein uL18</fullName>
    </recommendedName>
    <alternativeName>
        <fullName evidence="2">50S ribosomal protein L18</fullName>
    </alternativeName>
</protein>
<gene>
    <name evidence="1" type="primary">rpl18</name>
    <name type="ordered locus">YG5714_1434</name>
</gene>
<name>RL18_SACI7</name>
<keyword id="KW-0687">Ribonucleoprotein</keyword>
<keyword id="KW-0689">Ribosomal protein</keyword>
<keyword id="KW-0694">RNA-binding</keyword>
<keyword id="KW-0699">rRNA-binding</keyword>
<feature type="chain" id="PRO_1000214689" description="Large ribosomal subunit protein uL18">
    <location>
        <begin position="1"/>
        <end position="196"/>
    </location>
</feature>
<evidence type="ECO:0000255" key="1">
    <source>
        <dbReference type="HAMAP-Rule" id="MF_01337"/>
    </source>
</evidence>
<evidence type="ECO:0000305" key="2"/>
<organism>
    <name type="scientific">Saccharolobus islandicus (strain Y.G.57.14 / Yellowstone #1)</name>
    <name type="common">Sulfolobus islandicus</name>
    <dbReference type="NCBI Taxonomy" id="439386"/>
    <lineage>
        <taxon>Archaea</taxon>
        <taxon>Thermoproteota</taxon>
        <taxon>Thermoprotei</taxon>
        <taxon>Sulfolobales</taxon>
        <taxon>Sulfolobaceae</taxon>
        <taxon>Saccharolobus</taxon>
    </lineage>
</organism>